<accession>B6I9W2</accession>
<gene>
    <name evidence="1" type="primary">clsA</name>
    <name type="synonym">cls</name>
    <name type="ordered locus">ECSE_1297</name>
</gene>
<keyword id="KW-0997">Cell inner membrane</keyword>
<keyword id="KW-1003">Cell membrane</keyword>
<keyword id="KW-0444">Lipid biosynthesis</keyword>
<keyword id="KW-0443">Lipid metabolism</keyword>
<keyword id="KW-0472">Membrane</keyword>
<keyword id="KW-0594">Phospholipid biosynthesis</keyword>
<keyword id="KW-1208">Phospholipid metabolism</keyword>
<keyword id="KW-0677">Repeat</keyword>
<keyword id="KW-0808">Transferase</keyword>
<keyword id="KW-0812">Transmembrane</keyword>
<keyword id="KW-1133">Transmembrane helix</keyword>
<sequence length="486" mass="54822">MTTVYTLVSWLAILGYWLLIAGVTLRILMKRRAVPSAMAWLLIIYILPLVGIIAYLAVGELHLGKRRAERARAMWPSTAKWLNDLKACKHIFAEENSSVAAPLFKLCERRQGIAGVKGNQLQLMTESDDVMQALIRDIQLARHNIEMVFYIWQPGGMADQVAESLMAAARRGIHCRLMLDSAGSVAFFRSPWPELMRNAGIEVVEALKVNLMRVFLRRMDLRQHRKMIMIDNYIAYTGSMNMVDPRYFKQDAGVGQWIDLMARMEGPIATAMGIIYSCDWEIETGKRILPPPPDVNIMPFEQASGHTIHTIASGPGFPEDLIHQALLTAAYSAREYLIMTTPYFVPSDDLLHAICTAAQRGVDVSIILPRKNDSMLVGWASRAFFTELLAAGVKIYQFEGGLLHTKSVLVDGELSLVGTVNLDMRSLWLNFEITLAIDDKGFGADLAAVQDDYISRSRLLDARLWLKRPLWQRVAERLFYFFSPLL</sequence>
<comment type="function">
    <text evidence="1">Catalyzes the reversible phosphatidyl group transfer from one phosphatidylglycerol molecule to another to form cardiolipin (CL) (diphosphatidylglycerol) and glycerol.</text>
</comment>
<comment type="catalytic activity">
    <reaction evidence="1">
        <text>2 a 1,2-diacyl-sn-glycero-3-phospho-(1'-sn-glycerol) = a cardiolipin + glycerol</text>
        <dbReference type="Rhea" id="RHEA:31451"/>
        <dbReference type="ChEBI" id="CHEBI:17754"/>
        <dbReference type="ChEBI" id="CHEBI:62237"/>
        <dbReference type="ChEBI" id="CHEBI:64716"/>
    </reaction>
</comment>
<comment type="subcellular location">
    <subcellularLocation>
        <location evidence="1">Cell inner membrane</location>
        <topology evidence="1">Multi-pass membrane protein</topology>
    </subcellularLocation>
</comment>
<comment type="similarity">
    <text evidence="1">Belongs to the phospholipase D family. Cardiolipin synthase subfamily. ClsA sub-subfamily.</text>
</comment>
<dbReference type="EC" id="2.7.8.-" evidence="1"/>
<dbReference type="EMBL" id="AP009240">
    <property type="protein sequence ID" value="BAG76821.1"/>
    <property type="molecule type" value="Genomic_DNA"/>
</dbReference>
<dbReference type="RefSeq" id="WP_000214516.1">
    <property type="nucleotide sequence ID" value="NC_011415.1"/>
</dbReference>
<dbReference type="SMR" id="B6I9W2"/>
<dbReference type="GeneID" id="93775314"/>
<dbReference type="KEGG" id="ecy:ECSE_1297"/>
<dbReference type="HOGENOM" id="CLU_038053_1_0_6"/>
<dbReference type="Proteomes" id="UP000008199">
    <property type="component" value="Chromosome"/>
</dbReference>
<dbReference type="GO" id="GO:0005886">
    <property type="term" value="C:plasma membrane"/>
    <property type="evidence" value="ECO:0007669"/>
    <property type="project" value="UniProtKB-SubCell"/>
</dbReference>
<dbReference type="GO" id="GO:0008808">
    <property type="term" value="F:cardiolipin synthase activity"/>
    <property type="evidence" value="ECO:0007669"/>
    <property type="project" value="InterPro"/>
</dbReference>
<dbReference type="GO" id="GO:0032049">
    <property type="term" value="P:cardiolipin biosynthetic process"/>
    <property type="evidence" value="ECO:0007669"/>
    <property type="project" value="InterPro"/>
</dbReference>
<dbReference type="CDD" id="cd09152">
    <property type="entry name" value="PLDc_EcCLS_like_1"/>
    <property type="match status" value="1"/>
</dbReference>
<dbReference type="CDD" id="cd09158">
    <property type="entry name" value="PLDc_EcCLS_like_2"/>
    <property type="match status" value="1"/>
</dbReference>
<dbReference type="FunFam" id="3.30.870.10:FF:000002">
    <property type="entry name" value="Cardiolipin synthase A"/>
    <property type="match status" value="1"/>
</dbReference>
<dbReference type="FunFam" id="3.30.870.10:FF:000003">
    <property type="entry name" value="Cardiolipin synthase A"/>
    <property type="match status" value="1"/>
</dbReference>
<dbReference type="Gene3D" id="3.30.870.10">
    <property type="entry name" value="Endonuclease Chain A"/>
    <property type="match status" value="2"/>
</dbReference>
<dbReference type="HAMAP" id="MF_00190">
    <property type="entry name" value="Cardiolipin_synth_ClsA"/>
    <property type="match status" value="1"/>
</dbReference>
<dbReference type="InterPro" id="IPR022924">
    <property type="entry name" value="Cardiolipin_synthase"/>
</dbReference>
<dbReference type="InterPro" id="IPR030840">
    <property type="entry name" value="CL_synthase_A"/>
</dbReference>
<dbReference type="InterPro" id="IPR027379">
    <property type="entry name" value="CLS_N"/>
</dbReference>
<dbReference type="InterPro" id="IPR025202">
    <property type="entry name" value="PLD-like_dom"/>
</dbReference>
<dbReference type="InterPro" id="IPR001736">
    <property type="entry name" value="PLipase_D/transphosphatidylase"/>
</dbReference>
<dbReference type="NCBIfam" id="TIGR04265">
    <property type="entry name" value="bac_cardiolipin"/>
    <property type="match status" value="1"/>
</dbReference>
<dbReference type="PANTHER" id="PTHR21248">
    <property type="entry name" value="CARDIOLIPIN SYNTHASE"/>
    <property type="match status" value="1"/>
</dbReference>
<dbReference type="PANTHER" id="PTHR21248:SF22">
    <property type="entry name" value="PHOSPHOLIPASE D"/>
    <property type="match status" value="1"/>
</dbReference>
<dbReference type="Pfam" id="PF13091">
    <property type="entry name" value="PLDc_2"/>
    <property type="match status" value="2"/>
</dbReference>
<dbReference type="Pfam" id="PF13396">
    <property type="entry name" value="PLDc_N"/>
    <property type="match status" value="1"/>
</dbReference>
<dbReference type="SMART" id="SM00155">
    <property type="entry name" value="PLDc"/>
    <property type="match status" value="2"/>
</dbReference>
<dbReference type="SUPFAM" id="SSF56024">
    <property type="entry name" value="Phospholipase D/nuclease"/>
    <property type="match status" value="2"/>
</dbReference>
<dbReference type="PROSITE" id="PS50035">
    <property type="entry name" value="PLD"/>
    <property type="match status" value="2"/>
</dbReference>
<organism>
    <name type="scientific">Escherichia coli (strain SE11)</name>
    <dbReference type="NCBI Taxonomy" id="409438"/>
    <lineage>
        <taxon>Bacteria</taxon>
        <taxon>Pseudomonadati</taxon>
        <taxon>Pseudomonadota</taxon>
        <taxon>Gammaproteobacteria</taxon>
        <taxon>Enterobacterales</taxon>
        <taxon>Enterobacteriaceae</taxon>
        <taxon>Escherichia</taxon>
    </lineage>
</organism>
<evidence type="ECO:0000255" key="1">
    <source>
        <dbReference type="HAMAP-Rule" id="MF_00190"/>
    </source>
</evidence>
<feature type="chain" id="PRO_1000098906" description="Cardiolipin synthase A">
    <location>
        <begin position="1"/>
        <end position="486"/>
    </location>
</feature>
<feature type="transmembrane region" description="Helical" evidence="1">
    <location>
        <begin position="3"/>
        <end position="23"/>
    </location>
</feature>
<feature type="transmembrane region" description="Helical" evidence="1">
    <location>
        <begin position="38"/>
        <end position="58"/>
    </location>
</feature>
<feature type="domain" description="PLD phosphodiesterase 1" evidence="1">
    <location>
        <begin position="219"/>
        <end position="246"/>
    </location>
</feature>
<feature type="domain" description="PLD phosphodiesterase 2" evidence="1">
    <location>
        <begin position="399"/>
        <end position="426"/>
    </location>
</feature>
<feature type="active site" evidence="1">
    <location>
        <position position="224"/>
    </location>
</feature>
<feature type="active site" evidence="1">
    <location>
        <position position="226"/>
    </location>
</feature>
<feature type="active site" evidence="1">
    <location>
        <position position="231"/>
    </location>
</feature>
<feature type="active site" evidence="1">
    <location>
        <position position="404"/>
    </location>
</feature>
<feature type="active site" evidence="1">
    <location>
        <position position="406"/>
    </location>
</feature>
<feature type="active site" evidence="1">
    <location>
        <position position="411"/>
    </location>
</feature>
<name>CLSA_ECOSE</name>
<reference key="1">
    <citation type="journal article" date="2008" name="DNA Res.">
        <title>Complete genome sequence and comparative analysis of the wild-type commensal Escherichia coli strain SE11 isolated from a healthy adult.</title>
        <authorList>
            <person name="Oshima K."/>
            <person name="Toh H."/>
            <person name="Ogura Y."/>
            <person name="Sasamoto H."/>
            <person name="Morita H."/>
            <person name="Park S.-H."/>
            <person name="Ooka T."/>
            <person name="Iyoda S."/>
            <person name="Taylor T.D."/>
            <person name="Hayashi T."/>
            <person name="Itoh K."/>
            <person name="Hattori M."/>
        </authorList>
    </citation>
    <scope>NUCLEOTIDE SEQUENCE [LARGE SCALE GENOMIC DNA]</scope>
    <source>
        <strain>SE11</strain>
    </source>
</reference>
<protein>
    <recommendedName>
        <fullName evidence="1">Cardiolipin synthase A</fullName>
        <shortName evidence="1">CL synthase</shortName>
        <ecNumber evidence="1">2.7.8.-</ecNumber>
    </recommendedName>
</protein>
<proteinExistence type="inferred from homology"/>